<proteinExistence type="inferred from homology"/>
<reference key="1">
    <citation type="submission" date="2007-05" db="EMBL/GenBank/DDBJ databases">
        <title>Complete sequence of chromosome of Staphylococcus aureus subsp. aureus JH9.</title>
        <authorList>
            <consortium name="US DOE Joint Genome Institute"/>
            <person name="Copeland A."/>
            <person name="Lucas S."/>
            <person name="Lapidus A."/>
            <person name="Barry K."/>
            <person name="Detter J.C."/>
            <person name="Glavina del Rio T."/>
            <person name="Hammon N."/>
            <person name="Israni S."/>
            <person name="Pitluck S."/>
            <person name="Chain P."/>
            <person name="Malfatti S."/>
            <person name="Shin M."/>
            <person name="Vergez L."/>
            <person name="Schmutz J."/>
            <person name="Larimer F."/>
            <person name="Land M."/>
            <person name="Hauser L."/>
            <person name="Kyrpides N."/>
            <person name="Kim E."/>
            <person name="Tomasz A."/>
            <person name="Richardson P."/>
        </authorList>
    </citation>
    <scope>NUCLEOTIDE SEQUENCE [LARGE SCALE GENOMIC DNA]</scope>
    <source>
        <strain>JH9</strain>
    </source>
</reference>
<sequence>MKIQDYTKQMVDEKSFIDMAYTLLNDKGETMNLYDIIDEFRALGDYEYEEIENRVVQFYTDLNTDGRFLNVGENLWGLRDWYSVDDIEEKIAPTIQKFDILDADDEEDQNLKLLGEDEMDDDDDIPAQTDDQEELNDPEDEQVEEEINHSDIVIEEDEDELDEDEEVFEDEEDFND</sequence>
<comment type="function">
    <text evidence="1">Participates in both the initiation and recycling phases of transcription. In the presence of the delta subunit, RNAP displays an increased specificity of transcription, a decreased affinity for nucleic acids, and an increased efficiency of RNA synthesis because of enhanced recycling.</text>
</comment>
<comment type="subunit">
    <text evidence="1">RNAP is composed of a core of 2 alpha, a beta and a beta' subunits. The core is associated with a delta subunit and one of several sigma factors.</text>
</comment>
<comment type="similarity">
    <text evidence="1">Belongs to the RpoE family.</text>
</comment>
<accession>A5IUS3</accession>
<evidence type="ECO:0000255" key="1">
    <source>
        <dbReference type="HAMAP-Rule" id="MF_00357"/>
    </source>
</evidence>
<evidence type="ECO:0000255" key="2">
    <source>
        <dbReference type="PROSITE-ProRule" id="PRU01261"/>
    </source>
</evidence>
<evidence type="ECO:0000256" key="3">
    <source>
        <dbReference type="SAM" id="MobiDB-lite"/>
    </source>
</evidence>
<protein>
    <recommendedName>
        <fullName evidence="1">Probable DNA-directed RNA polymerase subunit delta</fullName>
    </recommendedName>
    <alternativeName>
        <fullName evidence="1">RNAP delta factor</fullName>
    </alternativeName>
</protein>
<gene>
    <name evidence="1" type="primary">rpoE</name>
    <name type="ordered locus">SaurJH9_2164</name>
</gene>
<organism>
    <name type="scientific">Staphylococcus aureus (strain JH9)</name>
    <dbReference type="NCBI Taxonomy" id="359786"/>
    <lineage>
        <taxon>Bacteria</taxon>
        <taxon>Bacillati</taxon>
        <taxon>Bacillota</taxon>
        <taxon>Bacilli</taxon>
        <taxon>Bacillales</taxon>
        <taxon>Staphylococcaceae</taxon>
        <taxon>Staphylococcus</taxon>
    </lineage>
</organism>
<keyword id="KW-0240">DNA-directed RNA polymerase</keyword>
<keyword id="KW-0548">Nucleotidyltransferase</keyword>
<keyword id="KW-0804">Transcription</keyword>
<keyword id="KW-0808">Transferase</keyword>
<dbReference type="EMBL" id="CP000703">
    <property type="protein sequence ID" value="ABQ49946.1"/>
    <property type="molecule type" value="Genomic_DNA"/>
</dbReference>
<dbReference type="RefSeq" id="WP_000701483.1">
    <property type="nucleotide sequence ID" value="NC_009487.1"/>
</dbReference>
<dbReference type="SMR" id="A5IUS3"/>
<dbReference type="GeneID" id="98346435"/>
<dbReference type="KEGG" id="saj:SaurJH9_2164"/>
<dbReference type="HOGENOM" id="CLU_116648_1_0_9"/>
<dbReference type="GO" id="GO:0000428">
    <property type="term" value="C:DNA-directed RNA polymerase complex"/>
    <property type="evidence" value="ECO:0007669"/>
    <property type="project" value="UniProtKB-KW"/>
</dbReference>
<dbReference type="GO" id="GO:0003899">
    <property type="term" value="F:DNA-directed RNA polymerase activity"/>
    <property type="evidence" value="ECO:0007669"/>
    <property type="project" value="UniProtKB-UniRule"/>
</dbReference>
<dbReference type="GO" id="GO:0006351">
    <property type="term" value="P:DNA-templated transcription"/>
    <property type="evidence" value="ECO:0007669"/>
    <property type="project" value="InterPro"/>
</dbReference>
<dbReference type="GO" id="GO:0006355">
    <property type="term" value="P:regulation of DNA-templated transcription"/>
    <property type="evidence" value="ECO:0007669"/>
    <property type="project" value="UniProtKB-UniRule"/>
</dbReference>
<dbReference type="Gene3D" id="1.10.10.1250">
    <property type="entry name" value="RNA polymerase, subunit delta, N-terminal domain"/>
    <property type="match status" value="1"/>
</dbReference>
<dbReference type="HAMAP" id="MF_00357">
    <property type="entry name" value="RNApol_bact_RpoE"/>
    <property type="match status" value="1"/>
</dbReference>
<dbReference type="InterPro" id="IPR007759">
    <property type="entry name" value="Asxl_HARE-HTH"/>
</dbReference>
<dbReference type="InterPro" id="IPR038087">
    <property type="entry name" value="RNAP_delta_N_dom_sf"/>
</dbReference>
<dbReference type="InterPro" id="IPR029757">
    <property type="entry name" value="RpoE"/>
</dbReference>
<dbReference type="NCBIfam" id="TIGR04567">
    <property type="entry name" value="RNAP_delt_lowGC"/>
    <property type="match status" value="1"/>
</dbReference>
<dbReference type="Pfam" id="PF05066">
    <property type="entry name" value="HARE-HTH"/>
    <property type="match status" value="1"/>
</dbReference>
<dbReference type="PROSITE" id="PS51913">
    <property type="entry name" value="HTH_HARE"/>
    <property type="match status" value="1"/>
</dbReference>
<feature type="chain" id="PRO_1000079391" description="Probable DNA-directed RNA polymerase subunit delta">
    <location>
        <begin position="1"/>
        <end position="176"/>
    </location>
</feature>
<feature type="domain" description="HTH HARE-type" evidence="2">
    <location>
        <begin position="14"/>
        <end position="81"/>
    </location>
</feature>
<feature type="region of interest" description="Disordered" evidence="3">
    <location>
        <begin position="114"/>
        <end position="176"/>
    </location>
</feature>
<feature type="compositionally biased region" description="Acidic residues" evidence="3">
    <location>
        <begin position="116"/>
        <end position="145"/>
    </location>
</feature>
<feature type="compositionally biased region" description="Acidic residues" evidence="3">
    <location>
        <begin position="153"/>
        <end position="176"/>
    </location>
</feature>
<name>RPOE_STAA9</name>